<evidence type="ECO:0000250" key="1"/>
<evidence type="ECO:0000250" key="2">
    <source>
        <dbReference type="UniProtKB" id="Q9USK2"/>
    </source>
</evidence>
<evidence type="ECO:0000255" key="3">
    <source>
        <dbReference type="PROSITE-ProRule" id="PRU00190"/>
    </source>
</evidence>
<evidence type="ECO:0000255" key="4">
    <source>
        <dbReference type="PROSITE-ProRule" id="PRU00900"/>
    </source>
</evidence>
<evidence type="ECO:0000256" key="5">
    <source>
        <dbReference type="SAM" id="MobiDB-lite"/>
    </source>
</evidence>
<name>SET9_NEUCR</name>
<gene>
    <name type="primary">hlm-1</name>
    <name type="synonym">set9</name>
    <name type="ORF">NCU08551</name>
</gene>
<comment type="function">
    <text evidence="2">Histone methyltransferase that trimethylates 'Lys-20' of histone H4 to form H4K20me3.</text>
</comment>
<comment type="catalytic activity">
    <reaction evidence="2 4">
        <text>L-lysyl(20)-[histone H4] + 3 S-adenosyl-L-methionine = N(6),N(6),N(6)-trimethyl-L-lysyl(20)-[histone H4] + 3 S-adenosyl-L-homocysteine + 3 H(+)</text>
        <dbReference type="Rhea" id="RHEA:64456"/>
        <dbReference type="Rhea" id="RHEA-COMP:15554"/>
        <dbReference type="Rhea" id="RHEA-COMP:15998"/>
        <dbReference type="ChEBI" id="CHEBI:15378"/>
        <dbReference type="ChEBI" id="CHEBI:29969"/>
        <dbReference type="ChEBI" id="CHEBI:57856"/>
        <dbReference type="ChEBI" id="CHEBI:59789"/>
        <dbReference type="ChEBI" id="CHEBI:61961"/>
        <dbReference type="EC" id="2.1.1.372"/>
    </reaction>
</comment>
<comment type="subcellular location">
    <subcellularLocation>
        <location evidence="1">Nucleus</location>
    </subcellularLocation>
    <subcellularLocation>
        <location evidence="1">Chromosome</location>
    </subcellularLocation>
</comment>
<comment type="similarity">
    <text evidence="4">Belongs to the class V-like SAM-binding methyltransferase superfamily. Histone-lysine methyltransferase family. Suvar4-20 subfamily.</text>
</comment>
<keyword id="KW-0156">Chromatin regulator</keyword>
<keyword id="KW-0158">Chromosome</keyword>
<keyword id="KW-0489">Methyltransferase</keyword>
<keyword id="KW-0539">Nucleus</keyword>
<keyword id="KW-1185">Reference proteome</keyword>
<keyword id="KW-0949">S-adenosyl-L-methionine</keyword>
<keyword id="KW-0808">Transferase</keyword>
<sequence>MTKPQGTGGKKKNQLTLAQLAAYDDILTDALVDHAYYWTTIPKNRTSYHPSRGIKEEEITKIIQNHLIVDPDIATAEEKLLATDGLKRFCNTLKTPREQNDFKAHLRRYMSIYLPDCPFEVNATNRYTIVTYEASITARRFIQRNETIKYLAGIQVVITPEEELEMSLRKKDFSLIVSSRSKSTSLFMGPARFANHDCNANARLITRGQAGIEIIACRNIEVGEEITVTYSESYFGENNCDCLCATCESNLRNGWRPVDGEAAVQKSIEDEQPTESSTPYSFRRKRRYGSTALQASRTPSVTPDMRPRVLRKSQSQMMLGERTSTTDSAAQGAGADGQSRKRALEMGTPPFTPTKKQKTTQYPVVPIALSTAPSRGSSDNETSKSPLSFSTTNDNVTDATSQGSESPGPIILSPEPTPIKQAIGLLKQEEGVNEVAVQQVPEAFTPPPSQPTEEEPPMVRPAFERLAARDRMSIANLISGPSSPAPPVVFSVAEVTTHRPKPQTLQLQKTDQTATISTLQTVTAAVQKEAPVVKTESPIKPTVGQVEKITQVQTTTKSCTPSKPKAQAAALPQHHMPVSTAPRGRVPHDYTLTPLLLSEPETAWIMCTHCASAFVQKNAYLTKSTCPRCERHSKLYGYMWPKTEKYGPNDKEERILDHRMINRFLTAEEEARARGRVYWRERMGSKGKQGSSAPSTKGTPAGEKNEQSAKQEQSQGQYVQERFAVRKKVKVQVRSTVPTPVIMTKKDEVAEAAALGLRRSGRARRVSAKLADCELDF</sequence>
<reference key="1">
    <citation type="journal article" date="2003" name="Nature">
        <title>The genome sequence of the filamentous fungus Neurospora crassa.</title>
        <authorList>
            <person name="Galagan J.E."/>
            <person name="Calvo S.E."/>
            <person name="Borkovich K.A."/>
            <person name="Selker E.U."/>
            <person name="Read N.D."/>
            <person name="Jaffe D.B."/>
            <person name="FitzHugh W."/>
            <person name="Ma L.-J."/>
            <person name="Smirnov S."/>
            <person name="Purcell S."/>
            <person name="Rehman B."/>
            <person name="Elkins T."/>
            <person name="Engels R."/>
            <person name="Wang S."/>
            <person name="Nielsen C.B."/>
            <person name="Butler J."/>
            <person name="Endrizzi M."/>
            <person name="Qui D."/>
            <person name="Ianakiev P."/>
            <person name="Bell-Pedersen D."/>
            <person name="Nelson M.A."/>
            <person name="Werner-Washburne M."/>
            <person name="Selitrennikoff C.P."/>
            <person name="Kinsey J.A."/>
            <person name="Braun E.L."/>
            <person name="Zelter A."/>
            <person name="Schulte U."/>
            <person name="Kothe G.O."/>
            <person name="Jedd G."/>
            <person name="Mewes H.-W."/>
            <person name="Staben C."/>
            <person name="Marcotte E."/>
            <person name="Greenberg D."/>
            <person name="Roy A."/>
            <person name="Foley K."/>
            <person name="Naylor J."/>
            <person name="Stange-Thomann N."/>
            <person name="Barrett R."/>
            <person name="Gnerre S."/>
            <person name="Kamal M."/>
            <person name="Kamvysselis M."/>
            <person name="Mauceli E.W."/>
            <person name="Bielke C."/>
            <person name="Rudd S."/>
            <person name="Frishman D."/>
            <person name="Krystofova S."/>
            <person name="Rasmussen C."/>
            <person name="Metzenberg R.L."/>
            <person name="Perkins D.D."/>
            <person name="Kroken S."/>
            <person name="Cogoni C."/>
            <person name="Macino G."/>
            <person name="Catcheside D.E.A."/>
            <person name="Li W."/>
            <person name="Pratt R.J."/>
            <person name="Osmani S.A."/>
            <person name="DeSouza C.P.C."/>
            <person name="Glass N.L."/>
            <person name="Orbach M.J."/>
            <person name="Berglund J.A."/>
            <person name="Voelker R."/>
            <person name="Yarden O."/>
            <person name="Plamann M."/>
            <person name="Seiler S."/>
            <person name="Dunlap J.C."/>
            <person name="Radford A."/>
            <person name="Aramayo R."/>
            <person name="Natvig D.O."/>
            <person name="Alex L.A."/>
            <person name="Mannhaupt G."/>
            <person name="Ebbole D.J."/>
            <person name="Freitag M."/>
            <person name="Paulsen I."/>
            <person name="Sachs M.S."/>
            <person name="Lander E.S."/>
            <person name="Nusbaum C."/>
            <person name="Birren B.W."/>
        </authorList>
    </citation>
    <scope>NUCLEOTIDE SEQUENCE [LARGE SCALE GENOMIC DNA]</scope>
    <source>
        <strain>ATCC 24698 / 74-OR23-1A / CBS 708.71 / DSM 1257 / FGSC 987</strain>
    </source>
</reference>
<protein>
    <recommendedName>
        <fullName>Histone-lysine N-methyltransferase set9</fullName>
        <ecNumber evidence="2">2.1.1.372</ecNumber>
    </recommendedName>
    <alternativeName>
        <fullName>Histone-lysine methyltransferase 1</fullName>
    </alternativeName>
    <alternativeName>
        <fullName>SET domain protein 9</fullName>
    </alternativeName>
</protein>
<proteinExistence type="inferred from homology"/>
<feature type="chain" id="PRO_0000281805" description="Histone-lysine N-methyltransferase set9">
    <location>
        <begin position="1"/>
        <end position="777"/>
    </location>
</feature>
<feature type="domain" description="SET" evidence="3">
    <location>
        <begin position="117"/>
        <end position="231"/>
    </location>
</feature>
<feature type="region of interest" description="Disordered" evidence="5">
    <location>
        <begin position="263"/>
        <end position="414"/>
    </location>
</feature>
<feature type="region of interest" description="Disordered" evidence="5">
    <location>
        <begin position="682"/>
        <end position="718"/>
    </location>
</feature>
<feature type="compositionally biased region" description="Polar residues" evidence="5">
    <location>
        <begin position="291"/>
        <end position="301"/>
    </location>
</feature>
<feature type="compositionally biased region" description="Low complexity" evidence="5">
    <location>
        <begin position="323"/>
        <end position="337"/>
    </location>
</feature>
<feature type="compositionally biased region" description="Polar residues" evidence="5">
    <location>
        <begin position="371"/>
        <end position="405"/>
    </location>
</feature>
<feature type="compositionally biased region" description="Polar residues" evidence="5">
    <location>
        <begin position="688"/>
        <end position="698"/>
    </location>
</feature>
<dbReference type="EC" id="2.1.1.372" evidence="2"/>
<dbReference type="EMBL" id="CM002238">
    <property type="protein sequence ID" value="EAA33797.2"/>
    <property type="molecule type" value="Genomic_DNA"/>
</dbReference>
<dbReference type="RefSeq" id="XP_963033.2">
    <property type="nucleotide sequence ID" value="XM_957940.2"/>
</dbReference>
<dbReference type="SMR" id="Q7SBJ9"/>
<dbReference type="STRING" id="367110.Q7SBJ9"/>
<dbReference type="PaxDb" id="5141-EFNCRP00000004675"/>
<dbReference type="EnsemblFungi" id="EAA33797">
    <property type="protein sequence ID" value="EAA33797"/>
    <property type="gene ID" value="NCU08551"/>
</dbReference>
<dbReference type="GeneID" id="3879172"/>
<dbReference type="KEGG" id="ncr:NCU08551"/>
<dbReference type="VEuPathDB" id="FungiDB:NCU08551"/>
<dbReference type="HOGENOM" id="CLU_013724_0_0_1"/>
<dbReference type="InParanoid" id="Q7SBJ9"/>
<dbReference type="OrthoDB" id="6627536at2759"/>
<dbReference type="Proteomes" id="UP000001805">
    <property type="component" value="Chromosome 3, Linkage Group III"/>
</dbReference>
<dbReference type="GO" id="GO:0005694">
    <property type="term" value="C:chromosome"/>
    <property type="evidence" value="ECO:0007669"/>
    <property type="project" value="UniProtKB-SubCell"/>
</dbReference>
<dbReference type="GO" id="GO:0005634">
    <property type="term" value="C:nucleus"/>
    <property type="evidence" value="ECO:0000318"/>
    <property type="project" value="GO_Central"/>
</dbReference>
<dbReference type="GO" id="GO:0042799">
    <property type="term" value="F:histone H4K20 methyltransferase activity"/>
    <property type="evidence" value="ECO:0000318"/>
    <property type="project" value="GO_Central"/>
</dbReference>
<dbReference type="GO" id="GO:0140943">
    <property type="term" value="F:histone H4K20 trimethyltransferase activity"/>
    <property type="evidence" value="ECO:0007669"/>
    <property type="project" value="UniProtKB-EC"/>
</dbReference>
<dbReference type="GO" id="GO:0032259">
    <property type="term" value="P:methylation"/>
    <property type="evidence" value="ECO:0007669"/>
    <property type="project" value="UniProtKB-KW"/>
</dbReference>
<dbReference type="CDD" id="cd10524">
    <property type="entry name" value="SET_Suv4-20-like"/>
    <property type="match status" value="1"/>
</dbReference>
<dbReference type="Gene3D" id="1.10.10.1700">
    <property type="entry name" value="Histone-lysine N-methyltransferase"/>
    <property type="match status" value="1"/>
</dbReference>
<dbReference type="Gene3D" id="2.170.270.10">
    <property type="entry name" value="SET domain"/>
    <property type="match status" value="1"/>
</dbReference>
<dbReference type="InterPro" id="IPR041938">
    <property type="entry name" value="Hist-Lys_N-MTase_N"/>
</dbReference>
<dbReference type="InterPro" id="IPR025783">
    <property type="entry name" value="Set9_fungi"/>
</dbReference>
<dbReference type="InterPro" id="IPR001214">
    <property type="entry name" value="SET_dom"/>
</dbReference>
<dbReference type="InterPro" id="IPR046341">
    <property type="entry name" value="SET_dom_sf"/>
</dbReference>
<dbReference type="InterPro" id="IPR039977">
    <property type="entry name" value="Suv4-20/Set9"/>
</dbReference>
<dbReference type="PANTHER" id="PTHR12977:SF4">
    <property type="entry name" value="HISTONE-LYSINE N-METHYLTRANSFERASE KMT5B"/>
    <property type="match status" value="1"/>
</dbReference>
<dbReference type="PANTHER" id="PTHR12977">
    <property type="entry name" value="SUPPRESSOR OF VARIEGATION 4-20-RELATED"/>
    <property type="match status" value="1"/>
</dbReference>
<dbReference type="Pfam" id="PF00856">
    <property type="entry name" value="SET"/>
    <property type="match status" value="1"/>
</dbReference>
<dbReference type="SMART" id="SM00317">
    <property type="entry name" value="SET"/>
    <property type="match status" value="1"/>
</dbReference>
<dbReference type="SUPFAM" id="SSF82199">
    <property type="entry name" value="SET domain"/>
    <property type="match status" value="1"/>
</dbReference>
<dbReference type="PROSITE" id="PS51567">
    <property type="entry name" value="SAM_MT43_SUVAR420_1"/>
    <property type="match status" value="1"/>
</dbReference>
<dbReference type="PROSITE" id="PS50280">
    <property type="entry name" value="SET"/>
    <property type="match status" value="1"/>
</dbReference>
<accession>Q7SBJ9</accession>
<organism>
    <name type="scientific">Neurospora crassa (strain ATCC 24698 / 74-OR23-1A / CBS 708.71 / DSM 1257 / FGSC 987)</name>
    <dbReference type="NCBI Taxonomy" id="367110"/>
    <lineage>
        <taxon>Eukaryota</taxon>
        <taxon>Fungi</taxon>
        <taxon>Dikarya</taxon>
        <taxon>Ascomycota</taxon>
        <taxon>Pezizomycotina</taxon>
        <taxon>Sordariomycetes</taxon>
        <taxon>Sordariomycetidae</taxon>
        <taxon>Sordariales</taxon>
        <taxon>Sordariaceae</taxon>
        <taxon>Neurospora</taxon>
    </lineage>
</organism>